<gene>
    <name evidence="1" type="primary">srp54</name>
    <name type="ordered locus">PYRAB04790</name>
    <name type="ORF">PAB0320</name>
</gene>
<name>SRP54_PYRAB</name>
<protein>
    <recommendedName>
        <fullName evidence="1">Signal recognition particle 54 kDa protein</fullName>
        <shortName evidence="1">SRP54</shortName>
        <ecNumber evidence="1">3.6.5.4</ecNumber>
    </recommendedName>
</protein>
<comment type="function">
    <text evidence="1">Involved in targeting and insertion of nascent membrane proteins into the cytoplasmic membrane. Binds to the hydrophobic signal sequence of the ribosome-nascent chain (RNC) as it emerges from the ribosomes. The SRP-RNC complex is then targeted to the cytoplasmic membrane where it interacts with the SRP receptor FtsY.</text>
</comment>
<comment type="catalytic activity">
    <reaction evidence="1">
        <text>GTP + H2O = GDP + phosphate + H(+)</text>
        <dbReference type="Rhea" id="RHEA:19669"/>
        <dbReference type="ChEBI" id="CHEBI:15377"/>
        <dbReference type="ChEBI" id="CHEBI:15378"/>
        <dbReference type="ChEBI" id="CHEBI:37565"/>
        <dbReference type="ChEBI" id="CHEBI:43474"/>
        <dbReference type="ChEBI" id="CHEBI:58189"/>
        <dbReference type="EC" id="3.6.5.4"/>
    </reaction>
</comment>
<comment type="subunit">
    <text evidence="1">Part of the signal recognition particle protein translocation system, which is composed of SRP and FtsY. Archaeal SRP consists of a 7S RNA molecule of 300 nucleotides and two protein subunits: SRP54 and SRP19.</text>
</comment>
<comment type="subcellular location">
    <subcellularLocation>
        <location evidence="1">Cytoplasm</location>
    </subcellularLocation>
    <text evidence="1">The SRP-RNC complex is targeted to the cytoplasmic membrane.</text>
</comment>
<comment type="domain">
    <text evidence="1">Composed of three domains: the N-terminal N domain, which is responsible for interactions with the ribosome, the central G domain, which binds GTP, and the C-terminal M domain, which binds the RNA and the signal sequence of the RNC.</text>
</comment>
<comment type="similarity">
    <text evidence="1">Belongs to the GTP-binding SRP family. SRP54 subfamily.</text>
</comment>
<evidence type="ECO:0000255" key="1">
    <source>
        <dbReference type="HAMAP-Rule" id="MF_00306"/>
    </source>
</evidence>
<proteinExistence type="inferred from homology"/>
<dbReference type="EC" id="3.6.5.4" evidence="1"/>
<dbReference type="EMBL" id="AJ248284">
    <property type="protein sequence ID" value="CAB49401.1"/>
    <property type="molecule type" value="Genomic_DNA"/>
</dbReference>
<dbReference type="EMBL" id="HE613800">
    <property type="protein sequence ID" value="CCE69862.1"/>
    <property type="molecule type" value="Genomic_DNA"/>
</dbReference>
<dbReference type="PIR" id="B75165">
    <property type="entry name" value="B75165"/>
</dbReference>
<dbReference type="RefSeq" id="WP_010867603.1">
    <property type="nucleotide sequence ID" value="NC_000868.1"/>
</dbReference>
<dbReference type="SMR" id="Q9V1E8"/>
<dbReference type="STRING" id="272844.PAB0320"/>
<dbReference type="KEGG" id="pab:PAB0320"/>
<dbReference type="PATRIC" id="fig|272844.11.peg.506"/>
<dbReference type="eggNOG" id="arCOG01228">
    <property type="taxonomic scope" value="Archaea"/>
</dbReference>
<dbReference type="HOGENOM" id="CLU_009301_6_0_2"/>
<dbReference type="OrthoDB" id="52849at2157"/>
<dbReference type="PhylomeDB" id="Q9V1E8"/>
<dbReference type="Proteomes" id="UP000000810">
    <property type="component" value="Chromosome"/>
</dbReference>
<dbReference type="Proteomes" id="UP000009139">
    <property type="component" value="Chromosome"/>
</dbReference>
<dbReference type="GO" id="GO:0048500">
    <property type="term" value="C:signal recognition particle"/>
    <property type="evidence" value="ECO:0007669"/>
    <property type="project" value="UniProtKB-UniRule"/>
</dbReference>
<dbReference type="GO" id="GO:0008312">
    <property type="term" value="F:7S RNA binding"/>
    <property type="evidence" value="ECO:0007669"/>
    <property type="project" value="UniProtKB-UniRule"/>
</dbReference>
<dbReference type="GO" id="GO:0016887">
    <property type="term" value="F:ATP hydrolysis activity"/>
    <property type="evidence" value="ECO:0007669"/>
    <property type="project" value="InterPro"/>
</dbReference>
<dbReference type="GO" id="GO:0005525">
    <property type="term" value="F:GTP binding"/>
    <property type="evidence" value="ECO:0007669"/>
    <property type="project" value="UniProtKB-UniRule"/>
</dbReference>
<dbReference type="GO" id="GO:0003924">
    <property type="term" value="F:GTPase activity"/>
    <property type="evidence" value="ECO:0007669"/>
    <property type="project" value="UniProtKB-UniRule"/>
</dbReference>
<dbReference type="GO" id="GO:0006614">
    <property type="term" value="P:SRP-dependent cotranslational protein targeting to membrane"/>
    <property type="evidence" value="ECO:0007669"/>
    <property type="project" value="InterPro"/>
</dbReference>
<dbReference type="CDD" id="cd17875">
    <property type="entry name" value="SRP54_G"/>
    <property type="match status" value="1"/>
</dbReference>
<dbReference type="FunFam" id="3.40.50.300:FF:000022">
    <property type="entry name" value="Signal recognition particle 54 kDa subunit"/>
    <property type="match status" value="1"/>
</dbReference>
<dbReference type="Gene3D" id="3.40.50.300">
    <property type="entry name" value="P-loop containing nucleotide triphosphate hydrolases"/>
    <property type="match status" value="1"/>
</dbReference>
<dbReference type="Gene3D" id="1.20.120.140">
    <property type="entry name" value="Signal recognition particle SRP54, nucleotide-binding domain"/>
    <property type="match status" value="1"/>
</dbReference>
<dbReference type="Gene3D" id="1.10.260.30">
    <property type="entry name" value="Signal recognition particle, SRP54 subunit, M-domain"/>
    <property type="match status" value="1"/>
</dbReference>
<dbReference type="HAMAP" id="MF_00306">
    <property type="entry name" value="SRP54"/>
    <property type="match status" value="1"/>
</dbReference>
<dbReference type="InterPro" id="IPR003593">
    <property type="entry name" value="AAA+_ATPase"/>
</dbReference>
<dbReference type="InterPro" id="IPR027417">
    <property type="entry name" value="P-loop_NTPase"/>
</dbReference>
<dbReference type="InterPro" id="IPR036891">
    <property type="entry name" value="Signal_recog_part_SRP54_M_sf"/>
</dbReference>
<dbReference type="InterPro" id="IPR013822">
    <property type="entry name" value="Signal_recog_particl_SRP54_hlx"/>
</dbReference>
<dbReference type="InterPro" id="IPR004125">
    <property type="entry name" value="Signal_recog_particle_SRP54_M"/>
</dbReference>
<dbReference type="InterPro" id="IPR036225">
    <property type="entry name" value="SRP/SRP_N"/>
</dbReference>
<dbReference type="InterPro" id="IPR022941">
    <property type="entry name" value="SRP54"/>
</dbReference>
<dbReference type="InterPro" id="IPR000897">
    <property type="entry name" value="SRP54_GTPase_dom"/>
</dbReference>
<dbReference type="InterPro" id="IPR042101">
    <property type="entry name" value="SRP54_N_sf"/>
</dbReference>
<dbReference type="PANTHER" id="PTHR11564">
    <property type="entry name" value="SIGNAL RECOGNITION PARTICLE 54K PROTEIN SRP54"/>
    <property type="match status" value="1"/>
</dbReference>
<dbReference type="PANTHER" id="PTHR11564:SF5">
    <property type="entry name" value="SIGNAL RECOGNITION PARTICLE SUBUNIT SRP54"/>
    <property type="match status" value="1"/>
</dbReference>
<dbReference type="Pfam" id="PF00448">
    <property type="entry name" value="SRP54"/>
    <property type="match status" value="1"/>
</dbReference>
<dbReference type="Pfam" id="PF02881">
    <property type="entry name" value="SRP54_N"/>
    <property type="match status" value="1"/>
</dbReference>
<dbReference type="Pfam" id="PF02978">
    <property type="entry name" value="SRP_SPB"/>
    <property type="match status" value="1"/>
</dbReference>
<dbReference type="SMART" id="SM00382">
    <property type="entry name" value="AAA"/>
    <property type="match status" value="1"/>
</dbReference>
<dbReference type="SMART" id="SM00962">
    <property type="entry name" value="SRP54"/>
    <property type="match status" value="1"/>
</dbReference>
<dbReference type="SMART" id="SM00963">
    <property type="entry name" value="SRP54_N"/>
    <property type="match status" value="1"/>
</dbReference>
<dbReference type="SUPFAM" id="SSF47364">
    <property type="entry name" value="Domain of the SRP/SRP receptor G-proteins"/>
    <property type="match status" value="1"/>
</dbReference>
<dbReference type="SUPFAM" id="SSF52540">
    <property type="entry name" value="P-loop containing nucleoside triphosphate hydrolases"/>
    <property type="match status" value="1"/>
</dbReference>
<dbReference type="SUPFAM" id="SSF47446">
    <property type="entry name" value="Signal peptide-binding domain"/>
    <property type="match status" value="1"/>
</dbReference>
<dbReference type="PROSITE" id="PS00300">
    <property type="entry name" value="SRP54"/>
    <property type="match status" value="1"/>
</dbReference>
<sequence length="443" mass="49724">MVLDSLGKALSNALKKIARAGSVDEALVKEVVRDIQRALIQADVNVRLVLKLTKEIQRRALEEKPPAGISKKEHIIKIVYEELTKFLGTEAKPIEIKEKPTILLMVGVQGSGKTTTVAKLARHFQKRGYKVGVVCSDTWRPGAYHQLKQLLDPYHIEVFGDPNEKDAIKLAKEGVEHFKAKGVDLIIVDTAGRHKEEKDLIEEMRMISNEIKPHEVILVIDGTIGQQAYNQALAFKEATPIGSIIVTKLDSSAKGGGALSAVAATGAPIKFIGTGEKIDDLEPFDPARFVSRLLGLGDIQGLLEKFKELEKEVEFTEEDLERFLKGKFTLKDMYAQLEAMRKMGPLKQILRMIPGLGYSLPDEVISVGEERLRKFKVIMDSMTEEELMNPDIINYSRIKRIARGSGTSVKDVKELLNQYNQMKKFFKSMNKRQLLRLARRFGM</sequence>
<accession>Q9V1E8</accession>
<accession>G8ZGI3</accession>
<feature type="chain" id="PRO_0000101181" description="Signal recognition particle 54 kDa protein">
    <location>
        <begin position="1"/>
        <end position="443"/>
    </location>
</feature>
<feature type="binding site" evidence="1">
    <location>
        <begin position="107"/>
        <end position="114"/>
    </location>
    <ligand>
        <name>GTP</name>
        <dbReference type="ChEBI" id="CHEBI:37565"/>
    </ligand>
</feature>
<feature type="binding site" evidence="1">
    <location>
        <begin position="189"/>
        <end position="193"/>
    </location>
    <ligand>
        <name>GTP</name>
        <dbReference type="ChEBI" id="CHEBI:37565"/>
    </ligand>
</feature>
<feature type="binding site" evidence="1">
    <location>
        <begin position="247"/>
        <end position="250"/>
    </location>
    <ligand>
        <name>GTP</name>
        <dbReference type="ChEBI" id="CHEBI:37565"/>
    </ligand>
</feature>
<reference key="1">
    <citation type="journal article" date="2003" name="Mol. Microbiol.">
        <title>An integrated analysis of the genome of the hyperthermophilic archaeon Pyrococcus abyssi.</title>
        <authorList>
            <person name="Cohen G.N."/>
            <person name="Barbe V."/>
            <person name="Flament D."/>
            <person name="Galperin M."/>
            <person name="Heilig R."/>
            <person name="Lecompte O."/>
            <person name="Poch O."/>
            <person name="Prieur D."/>
            <person name="Querellou J."/>
            <person name="Ripp R."/>
            <person name="Thierry J.-C."/>
            <person name="Van der Oost J."/>
            <person name="Weissenbach J."/>
            <person name="Zivanovic Y."/>
            <person name="Forterre P."/>
        </authorList>
    </citation>
    <scope>NUCLEOTIDE SEQUENCE [LARGE SCALE GENOMIC DNA]</scope>
    <source>
        <strain>GE5 / Orsay</strain>
    </source>
</reference>
<reference key="2">
    <citation type="journal article" date="2012" name="Curr. Microbiol.">
        <title>Re-annotation of two hyperthermophilic archaea Pyrococcus abyssi GE5 and Pyrococcus furiosus DSM 3638.</title>
        <authorList>
            <person name="Gao J."/>
            <person name="Wang J."/>
        </authorList>
    </citation>
    <scope>GENOME REANNOTATION</scope>
    <source>
        <strain>GE5 / Orsay</strain>
    </source>
</reference>
<keyword id="KW-0963">Cytoplasm</keyword>
<keyword id="KW-0342">GTP-binding</keyword>
<keyword id="KW-0378">Hydrolase</keyword>
<keyword id="KW-0547">Nucleotide-binding</keyword>
<keyword id="KW-0687">Ribonucleoprotein</keyword>
<keyword id="KW-0694">RNA-binding</keyword>
<keyword id="KW-0733">Signal recognition particle</keyword>
<organism>
    <name type="scientific">Pyrococcus abyssi (strain GE5 / Orsay)</name>
    <dbReference type="NCBI Taxonomy" id="272844"/>
    <lineage>
        <taxon>Archaea</taxon>
        <taxon>Methanobacteriati</taxon>
        <taxon>Methanobacteriota</taxon>
        <taxon>Thermococci</taxon>
        <taxon>Thermococcales</taxon>
        <taxon>Thermococcaceae</taxon>
        <taxon>Pyrococcus</taxon>
    </lineage>
</organism>